<evidence type="ECO:0000255" key="1">
    <source>
        <dbReference type="HAMAP-Rule" id="MF_01310"/>
    </source>
</evidence>
<evidence type="ECO:0000256" key="2">
    <source>
        <dbReference type="SAM" id="MobiDB-lite"/>
    </source>
</evidence>
<evidence type="ECO:0000305" key="3"/>
<dbReference type="EMBL" id="CP001095">
    <property type="protein sequence ID" value="ACJ53271.1"/>
    <property type="molecule type" value="Genomic_DNA"/>
</dbReference>
<dbReference type="EMBL" id="AP010889">
    <property type="protein sequence ID" value="BAJ69862.1"/>
    <property type="molecule type" value="Genomic_DNA"/>
</dbReference>
<dbReference type="RefSeq" id="WP_003829907.1">
    <property type="nucleotide sequence ID" value="NZ_JDTT01000039.1"/>
</dbReference>
<dbReference type="SMR" id="B7GNB5"/>
<dbReference type="GeneID" id="69578872"/>
<dbReference type="KEGG" id="bln:Blon_2212"/>
<dbReference type="KEGG" id="blon:BLIJ_2285"/>
<dbReference type="PATRIC" id="fig|391904.8.peg.2287"/>
<dbReference type="HOGENOM" id="CLU_072439_5_0_11"/>
<dbReference type="Proteomes" id="UP000001360">
    <property type="component" value="Chromosome"/>
</dbReference>
<dbReference type="GO" id="GO:1990904">
    <property type="term" value="C:ribonucleoprotein complex"/>
    <property type="evidence" value="ECO:0007669"/>
    <property type="project" value="UniProtKB-KW"/>
</dbReference>
<dbReference type="GO" id="GO:0005840">
    <property type="term" value="C:ribosome"/>
    <property type="evidence" value="ECO:0007669"/>
    <property type="project" value="UniProtKB-KW"/>
</dbReference>
<dbReference type="GO" id="GO:0019843">
    <property type="term" value="F:rRNA binding"/>
    <property type="evidence" value="ECO:0007669"/>
    <property type="project" value="UniProtKB-UniRule"/>
</dbReference>
<dbReference type="GO" id="GO:0003735">
    <property type="term" value="F:structural constituent of ribosome"/>
    <property type="evidence" value="ECO:0007669"/>
    <property type="project" value="InterPro"/>
</dbReference>
<dbReference type="GO" id="GO:0006412">
    <property type="term" value="P:translation"/>
    <property type="evidence" value="ECO:0007669"/>
    <property type="project" value="UniProtKB-UniRule"/>
</dbReference>
<dbReference type="FunFam" id="3.30.420.80:FF:000001">
    <property type="entry name" value="30S ribosomal protein S11"/>
    <property type="match status" value="1"/>
</dbReference>
<dbReference type="Gene3D" id="3.30.420.80">
    <property type="entry name" value="Ribosomal protein S11"/>
    <property type="match status" value="1"/>
</dbReference>
<dbReference type="HAMAP" id="MF_01310">
    <property type="entry name" value="Ribosomal_uS11"/>
    <property type="match status" value="1"/>
</dbReference>
<dbReference type="InterPro" id="IPR001971">
    <property type="entry name" value="Ribosomal_uS11"/>
</dbReference>
<dbReference type="InterPro" id="IPR019981">
    <property type="entry name" value="Ribosomal_uS11_bac-type"/>
</dbReference>
<dbReference type="InterPro" id="IPR018102">
    <property type="entry name" value="Ribosomal_uS11_CS"/>
</dbReference>
<dbReference type="InterPro" id="IPR036967">
    <property type="entry name" value="Ribosomal_uS11_sf"/>
</dbReference>
<dbReference type="NCBIfam" id="NF003698">
    <property type="entry name" value="PRK05309.1"/>
    <property type="match status" value="1"/>
</dbReference>
<dbReference type="NCBIfam" id="TIGR03632">
    <property type="entry name" value="uS11_bact"/>
    <property type="match status" value="1"/>
</dbReference>
<dbReference type="PANTHER" id="PTHR11759">
    <property type="entry name" value="40S RIBOSOMAL PROTEIN S14/30S RIBOSOMAL PROTEIN S11"/>
    <property type="match status" value="1"/>
</dbReference>
<dbReference type="Pfam" id="PF00411">
    <property type="entry name" value="Ribosomal_S11"/>
    <property type="match status" value="1"/>
</dbReference>
<dbReference type="PIRSF" id="PIRSF002131">
    <property type="entry name" value="Ribosomal_S11"/>
    <property type="match status" value="1"/>
</dbReference>
<dbReference type="SUPFAM" id="SSF53137">
    <property type="entry name" value="Translational machinery components"/>
    <property type="match status" value="1"/>
</dbReference>
<dbReference type="PROSITE" id="PS00054">
    <property type="entry name" value="RIBOSOMAL_S11"/>
    <property type="match status" value="1"/>
</dbReference>
<sequence length="132" mass="13916">MAAPKQAARKPRRRDRKSVPVGQAHIKSTFNNTIISITDPSGAVVSWASGGDVGFKGSRKSTPYAAGMAAESAARKAMEHGVKKVDVFVKGPGSGRETAIRSLQSAGLEVGSITDVTPQAHNGVRPPKRRRV</sequence>
<comment type="function">
    <text evidence="1">Located on the platform of the 30S subunit, it bridges several disparate RNA helices of the 16S rRNA. Forms part of the Shine-Dalgarno cleft in the 70S ribosome.</text>
</comment>
<comment type="subunit">
    <text evidence="1">Part of the 30S ribosomal subunit. Interacts with proteins S7 and S18. Binds to IF-3.</text>
</comment>
<comment type="similarity">
    <text evidence="1">Belongs to the universal ribosomal protein uS11 family.</text>
</comment>
<protein>
    <recommendedName>
        <fullName evidence="1">Small ribosomal subunit protein uS11</fullName>
    </recommendedName>
    <alternativeName>
        <fullName evidence="3">30S ribosomal protein S11</fullName>
    </alternativeName>
</protein>
<organism>
    <name type="scientific">Bifidobacterium longum subsp. infantis (strain ATCC 15697 / DSM 20088 / JCM 1222 / NCTC 11817 / S12)</name>
    <dbReference type="NCBI Taxonomy" id="391904"/>
    <lineage>
        <taxon>Bacteria</taxon>
        <taxon>Bacillati</taxon>
        <taxon>Actinomycetota</taxon>
        <taxon>Actinomycetes</taxon>
        <taxon>Bifidobacteriales</taxon>
        <taxon>Bifidobacteriaceae</taxon>
        <taxon>Bifidobacterium</taxon>
    </lineage>
</organism>
<name>RS11_BIFLS</name>
<reference key="1">
    <citation type="journal article" date="2008" name="Proc. Natl. Acad. Sci. U.S.A.">
        <title>The genome sequence of Bifidobacterium longum subsp. infantis reveals adaptations for milk utilization within the infant microbiome.</title>
        <authorList>
            <person name="Sela D.A."/>
            <person name="Chapman J."/>
            <person name="Adeuya A."/>
            <person name="Kim J.H."/>
            <person name="Chen F."/>
            <person name="Whitehead T.R."/>
            <person name="Lapidus A."/>
            <person name="Rokhsar D.S."/>
            <person name="Lebrilla C.B."/>
            <person name="German J.B."/>
            <person name="Price N.P."/>
            <person name="Richardson P.M."/>
            <person name="Mills D.A."/>
        </authorList>
    </citation>
    <scope>NUCLEOTIDE SEQUENCE [LARGE SCALE GENOMIC DNA]</scope>
    <source>
        <strain>ATCC 15697 / DSM 20088 / JCM 1222 / NCTC 11817 / S12</strain>
    </source>
</reference>
<reference key="2">
    <citation type="journal article" date="2011" name="Nature">
        <title>Bifidobacteria can protect from enteropathogenic infection through production of acetate.</title>
        <authorList>
            <person name="Fukuda S."/>
            <person name="Toh H."/>
            <person name="Hase K."/>
            <person name="Oshima K."/>
            <person name="Nakanishi Y."/>
            <person name="Yoshimura K."/>
            <person name="Tobe T."/>
            <person name="Clarke J.M."/>
            <person name="Topping D.L."/>
            <person name="Suzuki T."/>
            <person name="Taylor T.D."/>
            <person name="Itoh K."/>
            <person name="Kikuchi J."/>
            <person name="Morita H."/>
            <person name="Hattori M."/>
            <person name="Ohno H."/>
        </authorList>
    </citation>
    <scope>NUCLEOTIDE SEQUENCE [LARGE SCALE GENOMIC DNA]</scope>
    <source>
        <strain>ATCC 15697 / DSM 20088 / JCM 1222 / NCTC 11817 / S12</strain>
    </source>
</reference>
<gene>
    <name evidence="1" type="primary">rpsK</name>
    <name type="ordered locus">Blon_2212</name>
    <name type="ordered locus">BLIJ_2285</name>
</gene>
<keyword id="KW-0687">Ribonucleoprotein</keyword>
<keyword id="KW-0689">Ribosomal protein</keyword>
<keyword id="KW-0694">RNA-binding</keyword>
<keyword id="KW-0699">rRNA-binding</keyword>
<proteinExistence type="inferred from homology"/>
<accession>B7GNB5</accession>
<accession>E8MN59</accession>
<feature type="chain" id="PRO_1000165532" description="Small ribosomal subunit protein uS11">
    <location>
        <begin position="1"/>
        <end position="132"/>
    </location>
</feature>
<feature type="region of interest" description="Disordered" evidence="2">
    <location>
        <begin position="1"/>
        <end position="24"/>
    </location>
</feature>
<feature type="compositionally biased region" description="Basic residues" evidence="2">
    <location>
        <begin position="7"/>
        <end position="16"/>
    </location>
</feature>